<proteinExistence type="evidence at protein level"/>
<name>MFTE_MYCS2</name>
<evidence type="ECO:0000250" key="1">
    <source>
        <dbReference type="UniProtKB" id="A0PM51"/>
    </source>
</evidence>
<evidence type="ECO:0000250" key="2">
    <source>
        <dbReference type="UniProtKB" id="P83772"/>
    </source>
</evidence>
<evidence type="ECO:0000269" key="3">
    <source>
    </source>
</evidence>
<evidence type="ECO:0000269" key="4">
    <source>
    </source>
</evidence>
<evidence type="ECO:0000269" key="5">
    <source>
    </source>
</evidence>
<evidence type="ECO:0000269" key="6">
    <source>
    </source>
</evidence>
<evidence type="ECO:0000303" key="7">
    <source>
    </source>
</evidence>
<evidence type="ECO:0000303" key="8">
    <source>
    </source>
</evidence>
<evidence type="ECO:0000305" key="9"/>
<evidence type="ECO:0000305" key="10">
    <source>
    </source>
</evidence>
<evidence type="ECO:0000312" key="11">
    <source>
        <dbReference type="EMBL" id="ABK70622.1"/>
    </source>
</evidence>
<comment type="function">
    <text evidence="4 5 6">Peptidase involved in the biosynthesis of the enzyme cofactor mycofactocin (MFT) (PubMed:33014324). Catalyzes cleavage of the MftC-modified MftA peptide to liberate its final two residues, which consist of a cross-linked valine-decarboxylated tyrosine dipeptide (named 3-amino-5-[(4-hydroxyphenyl)methyl]-4,4-dimethyl-2-pyrrolidin-2-one or ADHP) (PubMed:30183269). Is required for the in vivo ethanol assimilation in M.smegmatis (PubMed:31113891).</text>
</comment>
<comment type="catalytic activity">
    <reaction evidence="4">
        <text>[mycofactocin precursor peptide]-C-terminal glycyl-N-{5-[(4-hydroxyphenyl)methyl]-4,4-dimethyl-2-oxopyrrolidin-3-yl}acetamide + H2O = [mycofactocin precursor peptide]-C-terminal glycine + 3-amino-5-[(4-hydroxyphenyl)methyl]-4,4-dimethyl-2-pyrrolidin-2-one</text>
        <dbReference type="Rhea" id="RHEA:65504"/>
        <dbReference type="Rhea" id="RHEA-COMP:16818"/>
        <dbReference type="Rhea" id="RHEA-COMP:16819"/>
        <dbReference type="ChEBI" id="CHEBI:15377"/>
        <dbReference type="ChEBI" id="CHEBI:83148"/>
        <dbReference type="ChEBI" id="CHEBI:150863"/>
        <dbReference type="ChEBI" id="CHEBI:156518"/>
        <dbReference type="EC" id="3.4.14.14"/>
    </reaction>
</comment>
<comment type="cofactor">
    <cofactor evidence="3">
        <name>Fe(2+)</name>
        <dbReference type="ChEBI" id="CHEBI:29033"/>
    </cofactor>
    <text evidence="1">MftE appears to bind one Fe(2+) and one Zn(2+) ion per subunit. Fe(2+) seems to be catalytically active while Zn(2+) could play an auxiliary role.</text>
</comment>
<comment type="cofactor">
    <cofactor evidence="3">
        <name>Zn(2+)</name>
        <dbReference type="ChEBI" id="CHEBI:29105"/>
    </cofactor>
</comment>
<comment type="subunit">
    <text evidence="1">Homooctamer.</text>
</comment>
<comment type="disruption phenotype">
    <text evidence="5 6">Cells lacking this gene present delayed growth in ethanol as the sole growth substrate (PubMed:31113891). Glycosylated mycofactocins are produced in this mutant, albeit in significantly lower amounts than wild type. MtfE can likely be complemented by an unknown peptidase present in the metabolic background of mycobacteria (PubMed:33014324).</text>
</comment>
<comment type="similarity">
    <text evidence="9">Belongs to the creatininase superfamily.</text>
</comment>
<comment type="caution">
    <text evidence="3 4">Was originally thought to cleave the C-terminal dipeptide from the first intermediate product formed by the action of MftC on MftA, i.e. MftA modified with a C-terminal glycyl-L-valyl-decarboxylated L-tyrosine (PubMed:28077628). However, it was later shown that the terminal product formed by the action of MftC on MftA is the true substrate of MftE, i.e. MftA modified with a C-terminal glycyl-3-amino-5-[(4-hydroxyphenyl)methyl]-4,4-dimethylpyrrolidin-2-one (PubMed:30183269).</text>
</comment>
<comment type="sequence caution" evidence="9">
    <conflict type="erroneous initiation">
        <sequence resource="EMBL-CDS" id="ABK70622"/>
    </conflict>
    <text>Truncated N-terminus.</text>
</comment>
<sequence length="247" mass="25761">MNSAYHRHVAFPSGLGTSTSRQLHSMVPMVLVPVGSTEQHGPHLPLDTDTRIAAAVAGTVVEQFGAPADRDAVVAPPVAYGASGEHEGFPGTVSIGTAALELLLVEYGRSASKWTSRIVFVNGHGGNVEALAAAVALLRYEGRDAGWVPCSVPDADAHAGHTETSVLLHISPDDVLTDELVCGNTAPLAELMPRMRSGGVAAVSELGILGDPTTATAAEGERIFAEMVNGCADRIKRWQPDRNGLLT</sequence>
<keyword id="KW-0378">Hydrolase</keyword>
<keyword id="KW-0408">Iron</keyword>
<keyword id="KW-0479">Metal-binding</keyword>
<keyword id="KW-0645">Protease</keyword>
<keyword id="KW-1185">Reference proteome</keyword>
<keyword id="KW-0862">Zinc</keyword>
<protein>
    <recommendedName>
        <fullName evidence="10">Mycofactocin precursor peptide peptidase</fullName>
        <ecNumber evidence="4">3.4.14.14</ecNumber>
    </recommendedName>
</protein>
<reference key="1">
    <citation type="submission" date="2006-10" db="EMBL/GenBank/DDBJ databases">
        <authorList>
            <person name="Fleischmann R.D."/>
            <person name="Dodson R.J."/>
            <person name="Haft D.H."/>
            <person name="Merkel J.S."/>
            <person name="Nelson W.C."/>
            <person name="Fraser C.M."/>
        </authorList>
    </citation>
    <scope>NUCLEOTIDE SEQUENCE [LARGE SCALE GENOMIC DNA]</scope>
    <source>
        <strain>ATCC 700084 / mc(2)155</strain>
    </source>
</reference>
<reference key="2">
    <citation type="journal article" date="2017" name="J. Biol. Chem.">
        <title>The Creatininase Homolog MftE from Mycobacterium smegmatis Catalyzes a Peptide Cleavage Reaction in the Biosynthesis of a Novel Ribosomally Synthesized Post-translationally Modified Peptide (RiPP).</title>
        <authorList>
            <person name="Bruender N.A."/>
            <person name="Bandarian V."/>
        </authorList>
    </citation>
    <scope>PEPTIDASE ACTIVITY</scope>
    <scope>COFACTOR</scope>
    <source>
        <strain>ATCC 700084 / mc(2)155</strain>
    </source>
</reference>
<reference key="3">
    <citation type="journal article" date="2018" name="Biochemistry">
        <title>Mycofactocin Biosynthesis Proceeds through 3-Amino-5-[(p-hydroxyphenyl)methyl]-4,4-dimethyl-2-pyrrolidinone (AHDP); Direct Observation of MftE Specificity toward MftA.</title>
        <authorList>
            <person name="Ayikpoe R."/>
            <person name="Salazar J."/>
            <person name="Majestic B."/>
            <person name="Latham J.A."/>
        </authorList>
    </citation>
    <scope>FUNCTION</scope>
    <scope>CATALYTIC ACTIVITY</scope>
    <source>
        <strain>ATCC 700084 / mc(2)155</strain>
    </source>
</reference>
<reference key="4">
    <citation type="journal article" date="2019" name="MBio">
        <title>Mycofactocin Is Associated with Ethanol Metabolism in Mycobacteria.</title>
        <authorList>
            <person name="Krishnamoorthy G."/>
            <person name="Kaiser P."/>
            <person name="Lozza L."/>
            <person name="Hahnke K."/>
            <person name="Mollenkopf H.J."/>
            <person name="Kaufmann S.H.E."/>
        </authorList>
    </citation>
    <scope>FUNCTION</scope>
    <scope>DISRUPTION PHENOTYPE</scope>
    <source>
        <strain>ATCC 700084 / mc(2)155</strain>
    </source>
</reference>
<reference key="5">
    <citation type="journal article" date="2020" name="Chem. Sci.">
        <title>Structure elucidation of the redox cofactor mycofactocin reveals oligo-glycosylation by MftF.</title>
        <authorList>
            <person name="Pena-Ortiz L."/>
            <person name="Graca A.P."/>
            <person name="Guo H."/>
            <person name="Braga D."/>
            <person name="Koellner T.G."/>
            <person name="Regestein L."/>
            <person name="Beemelmanns C."/>
            <person name="Lackner G."/>
        </authorList>
    </citation>
    <scope>FUNCTION</scope>
    <scope>DISRUPTION PHENOTYPE</scope>
    <source>
        <strain>ATCC 700084 / mc(2)155</strain>
    </source>
</reference>
<gene>
    <name evidence="7 8" type="primary">mftE</name>
    <name evidence="11" type="ordered locus">MSMEG_1425</name>
</gene>
<accession>A0QSC0</accession>
<feature type="chain" id="PRO_0000452051" description="Mycofactocin precursor peptide peptidase">
    <location>
        <begin position="1"/>
        <end position="247"/>
    </location>
</feature>
<feature type="binding site" evidence="2">
    <location>
        <position position="38"/>
    </location>
    <ligand>
        <name>a divalent metal cation</name>
        <dbReference type="ChEBI" id="CHEBI:60240"/>
        <label>1</label>
    </ligand>
</feature>
<feature type="binding site" evidence="2">
    <location>
        <position position="40"/>
    </location>
    <ligand>
        <name>a divalent metal cation</name>
        <dbReference type="ChEBI" id="CHEBI:60240"/>
        <label>2</label>
    </ligand>
</feature>
<feature type="binding site" evidence="2">
    <location>
        <position position="49"/>
    </location>
    <ligand>
        <name>a divalent metal cation</name>
        <dbReference type="ChEBI" id="CHEBI:60240"/>
        <label>1</label>
    </ligand>
</feature>
<feature type="binding site" evidence="2">
    <location>
        <position position="49"/>
    </location>
    <ligand>
        <name>a divalent metal cation</name>
        <dbReference type="ChEBI" id="CHEBI:60240"/>
        <label>2</label>
    </ligand>
</feature>
<feature type="binding site" evidence="2">
    <location>
        <position position="124"/>
    </location>
    <ligand>
        <name>a divalent metal cation</name>
        <dbReference type="ChEBI" id="CHEBI:60240"/>
        <label>1</label>
    </ligand>
</feature>
<feature type="binding site" evidence="2">
    <location>
        <position position="163"/>
    </location>
    <ligand>
        <name>a divalent metal cation</name>
        <dbReference type="ChEBI" id="CHEBI:60240"/>
        <label>2</label>
    </ligand>
</feature>
<organism>
    <name type="scientific">Mycolicibacterium smegmatis (strain ATCC 700084 / mc(2)155)</name>
    <name type="common">Mycobacterium smegmatis</name>
    <dbReference type="NCBI Taxonomy" id="246196"/>
    <lineage>
        <taxon>Bacteria</taxon>
        <taxon>Bacillati</taxon>
        <taxon>Actinomycetota</taxon>
        <taxon>Actinomycetes</taxon>
        <taxon>Mycobacteriales</taxon>
        <taxon>Mycobacteriaceae</taxon>
        <taxon>Mycolicibacterium</taxon>
    </lineage>
</organism>
<dbReference type="EC" id="3.4.14.14" evidence="4"/>
<dbReference type="EMBL" id="CP000480">
    <property type="protein sequence ID" value="ABK70622.1"/>
    <property type="status" value="ALT_INIT"/>
    <property type="molecule type" value="Genomic_DNA"/>
</dbReference>
<dbReference type="RefSeq" id="WP_014877069.1">
    <property type="nucleotide sequence ID" value="NZ_SIJM01000016.1"/>
</dbReference>
<dbReference type="RefSeq" id="YP_885808.1">
    <property type="nucleotide sequence ID" value="NC_008596.1"/>
</dbReference>
<dbReference type="SMR" id="A0QSC0"/>
<dbReference type="STRING" id="246196.MSMEG_1425"/>
<dbReference type="PaxDb" id="246196-MSMEI_1390"/>
<dbReference type="GeneID" id="93456269"/>
<dbReference type="KEGG" id="msm:MSMEG_1425"/>
<dbReference type="PATRIC" id="fig|246196.19.peg.1412"/>
<dbReference type="eggNOG" id="COG1402">
    <property type="taxonomic scope" value="Bacteria"/>
</dbReference>
<dbReference type="OrthoDB" id="9801445at2"/>
<dbReference type="Proteomes" id="UP000000757">
    <property type="component" value="Chromosome"/>
</dbReference>
<dbReference type="GO" id="GO:0016811">
    <property type="term" value="F:hydrolase activity, acting on carbon-nitrogen (but not peptide) bonds, in linear amides"/>
    <property type="evidence" value="ECO:0007669"/>
    <property type="project" value="TreeGrafter"/>
</dbReference>
<dbReference type="GO" id="GO:0046872">
    <property type="term" value="F:metal ion binding"/>
    <property type="evidence" value="ECO:0007669"/>
    <property type="project" value="UniProtKB-KW"/>
</dbReference>
<dbReference type="GO" id="GO:0008233">
    <property type="term" value="F:peptidase activity"/>
    <property type="evidence" value="ECO:0007669"/>
    <property type="project" value="UniProtKB-KW"/>
</dbReference>
<dbReference type="GO" id="GO:0006508">
    <property type="term" value="P:proteolysis"/>
    <property type="evidence" value="ECO:0007669"/>
    <property type="project" value="UniProtKB-KW"/>
</dbReference>
<dbReference type="GO" id="GO:0009231">
    <property type="term" value="P:riboflavin biosynthetic process"/>
    <property type="evidence" value="ECO:0007669"/>
    <property type="project" value="TreeGrafter"/>
</dbReference>
<dbReference type="Gene3D" id="3.40.50.10310">
    <property type="entry name" value="Creatininase"/>
    <property type="match status" value="1"/>
</dbReference>
<dbReference type="InterPro" id="IPR024087">
    <property type="entry name" value="Creatininase-like_sf"/>
</dbReference>
<dbReference type="InterPro" id="IPR003785">
    <property type="entry name" value="Creatininase/forma_Hydrolase"/>
</dbReference>
<dbReference type="InterPro" id="IPR023871">
    <property type="entry name" value="MftE"/>
</dbReference>
<dbReference type="NCBIfam" id="TIGR03964">
    <property type="entry name" value="mycofact_creat"/>
    <property type="match status" value="1"/>
</dbReference>
<dbReference type="PANTHER" id="PTHR35005:SF1">
    <property type="entry name" value="2-AMINO-5-FORMYLAMINO-6-RIBOSYLAMINOPYRIMIDIN-4(3H)-ONE 5'-MONOPHOSPHATE DEFORMYLASE"/>
    <property type="match status" value="1"/>
</dbReference>
<dbReference type="PANTHER" id="PTHR35005">
    <property type="entry name" value="3-DEHYDRO-SCYLLO-INOSOSE HYDROLASE"/>
    <property type="match status" value="1"/>
</dbReference>
<dbReference type="Pfam" id="PF02633">
    <property type="entry name" value="Creatininase"/>
    <property type="match status" value="1"/>
</dbReference>
<dbReference type="SUPFAM" id="SSF102215">
    <property type="entry name" value="Creatininase"/>
    <property type="match status" value="1"/>
</dbReference>